<organism>
    <name type="scientific">Mus musculus</name>
    <name type="common">Mouse</name>
    <dbReference type="NCBI Taxonomy" id="10090"/>
    <lineage>
        <taxon>Eukaryota</taxon>
        <taxon>Metazoa</taxon>
        <taxon>Chordata</taxon>
        <taxon>Craniata</taxon>
        <taxon>Vertebrata</taxon>
        <taxon>Euteleostomi</taxon>
        <taxon>Mammalia</taxon>
        <taxon>Eutheria</taxon>
        <taxon>Euarchontoglires</taxon>
        <taxon>Glires</taxon>
        <taxon>Rodentia</taxon>
        <taxon>Myomorpha</taxon>
        <taxon>Muroidea</taxon>
        <taxon>Muridae</taxon>
        <taxon>Murinae</taxon>
        <taxon>Mus</taxon>
        <taxon>Mus</taxon>
    </lineage>
</organism>
<proteinExistence type="evidence at protein level"/>
<feature type="initiator methionine" description="Removed" evidence="3">
    <location>
        <position position="1"/>
    </location>
</feature>
<feature type="chain" id="PRO_0000216949" description="Fructose-bisphosphate aldolase C">
    <location>
        <begin position="2"/>
        <end position="363"/>
    </location>
</feature>
<feature type="active site" description="Proton acceptor" evidence="1">
    <location>
        <position position="188"/>
    </location>
</feature>
<feature type="active site" description="Schiff-base intermediate with dihydroxyacetone-P">
    <location>
        <position position="230"/>
    </location>
</feature>
<feature type="binding site">
    <location>
        <position position="56"/>
    </location>
    <ligand>
        <name>substrate</name>
    </ligand>
</feature>
<feature type="binding site">
    <location>
        <position position="147"/>
    </location>
    <ligand>
        <name>substrate</name>
    </ligand>
</feature>
<feature type="site" description="Necessary for preference for fructose 1,6-bisphosphate over fructose 1-phosphate">
    <location>
        <position position="363"/>
    </location>
</feature>
<feature type="modified residue" description="Phosphotyrosine" evidence="2">
    <location>
        <position position="5"/>
    </location>
</feature>
<feature type="modified residue" description="Phosphoserine" evidence="4">
    <location>
        <position position="36"/>
    </location>
</feature>
<feature type="modified residue" description="Phosphoserine" evidence="4">
    <location>
        <position position="39"/>
    </location>
</feature>
<feature type="modified residue" description="Phosphoserine" evidence="4">
    <location>
        <position position="45"/>
    </location>
</feature>
<feature type="modified residue" description="N6-acetyllysine" evidence="4">
    <location>
        <position position="111"/>
    </location>
</feature>
<feature type="sequence conflict" description="In Ref. 3; AAH04802/AAH08184." evidence="7" ref="3">
    <original>T</original>
    <variation>A</variation>
    <location>
        <position position="25"/>
    </location>
</feature>
<feature type="sequence conflict" description="In Ref. 2; BAC30300." evidence="7" ref="2">
    <original>Q</original>
    <variation>E</variation>
    <location>
        <position position="46"/>
    </location>
</feature>
<feature type="sequence conflict" description="In Ref. 4; CAA27422." evidence="7" ref="4">
    <original>V</original>
    <variation>A</variation>
    <location>
        <position position="62"/>
    </location>
</feature>
<feature type="sequence conflict" description="In Ref. 4; CAA27422." evidence="7" ref="4">
    <original>V</original>
    <variation>L</variation>
    <location>
        <position position="113"/>
    </location>
</feature>
<feature type="sequence conflict" description="In Ref. 3; AAH04802/AAH08184." evidence="7" ref="3">
    <original>R</original>
    <variation>H</variation>
    <location>
        <position position="201"/>
    </location>
</feature>
<feature type="sequence conflict" description="In Ref. 1; AAB32064." evidence="7" ref="1">
    <original>A</original>
    <variation>V</variation>
    <location>
        <position position="280"/>
    </location>
</feature>
<feature type="sequence conflict" description="In Ref. 3; AAH04802/AAH08184." evidence="7" ref="3">
    <original>I</original>
    <variation>V</variation>
    <location>
        <position position="358"/>
    </location>
</feature>
<gene>
    <name type="primary">Aldoc</name>
    <name type="synonym">Aldo3</name>
    <name type="synonym">Scrg2</name>
</gene>
<sequence length="363" mass="39395">MPHSYPALSAEQKKELSDIALRIVTPGKGILAADESVGSMAKRLSQIGVENTEENRRLYRQVLFSADDRVKKCIGGVIFFHETLYQKDDNGVPFVRTIQDKGILVGIKVDKGVVPLAGTDGETTTQGLDGLLERCAQYKKDGADFAKWRCVLKISDRTPSALAILENANVLARYASICQQNGIVPIVEPEILPDGDHDLKRCQYVTEKVLAAVYKALSDHHVYLEGTLLKPNMVTPGHACPIKYSPEEIAMATVTALRRTVPPAVPGVTFLSGGQSEEEASLNLNAINRCPLPRPWALTFSYGRALQASALNAWRGQRDNAGAATEEFIKRAEMNGLAAQGRYEGSGDGGAAAQSLYIANHAY</sequence>
<reference key="1">
    <citation type="journal article" date="1994" name="Development">
        <title>The cloning of zebrin II reveals its identity with aldolase C.</title>
        <authorList>
            <person name="Ahn A.H."/>
            <person name="Dziennis S."/>
            <person name="Hawkes R."/>
            <person name="Herrup K."/>
        </authorList>
    </citation>
    <scope>NUCLEOTIDE SEQUENCE [MRNA]</scope>
    <scope>TISSUE SPECIFICITY</scope>
    <scope>DEVELOPMENTAL STAGE</scope>
    <source>
        <strain>C57BL/6J</strain>
        <tissue>Cerebellum</tissue>
    </source>
</reference>
<reference key="2">
    <citation type="journal article" date="2005" name="Science">
        <title>The transcriptional landscape of the mammalian genome.</title>
        <authorList>
            <person name="Carninci P."/>
            <person name="Kasukawa T."/>
            <person name="Katayama S."/>
            <person name="Gough J."/>
            <person name="Frith M.C."/>
            <person name="Maeda N."/>
            <person name="Oyama R."/>
            <person name="Ravasi T."/>
            <person name="Lenhard B."/>
            <person name="Wells C."/>
            <person name="Kodzius R."/>
            <person name="Shimokawa K."/>
            <person name="Bajic V.B."/>
            <person name="Brenner S.E."/>
            <person name="Batalov S."/>
            <person name="Forrest A.R."/>
            <person name="Zavolan M."/>
            <person name="Davis M.J."/>
            <person name="Wilming L.G."/>
            <person name="Aidinis V."/>
            <person name="Allen J.E."/>
            <person name="Ambesi-Impiombato A."/>
            <person name="Apweiler R."/>
            <person name="Aturaliya R.N."/>
            <person name="Bailey T.L."/>
            <person name="Bansal M."/>
            <person name="Baxter L."/>
            <person name="Beisel K.W."/>
            <person name="Bersano T."/>
            <person name="Bono H."/>
            <person name="Chalk A.M."/>
            <person name="Chiu K.P."/>
            <person name="Choudhary V."/>
            <person name="Christoffels A."/>
            <person name="Clutterbuck D.R."/>
            <person name="Crowe M.L."/>
            <person name="Dalla E."/>
            <person name="Dalrymple B.P."/>
            <person name="de Bono B."/>
            <person name="Della Gatta G."/>
            <person name="di Bernardo D."/>
            <person name="Down T."/>
            <person name="Engstrom P."/>
            <person name="Fagiolini M."/>
            <person name="Faulkner G."/>
            <person name="Fletcher C.F."/>
            <person name="Fukushima T."/>
            <person name="Furuno M."/>
            <person name="Futaki S."/>
            <person name="Gariboldi M."/>
            <person name="Georgii-Hemming P."/>
            <person name="Gingeras T.R."/>
            <person name="Gojobori T."/>
            <person name="Green R.E."/>
            <person name="Gustincich S."/>
            <person name="Harbers M."/>
            <person name="Hayashi Y."/>
            <person name="Hensch T.K."/>
            <person name="Hirokawa N."/>
            <person name="Hill D."/>
            <person name="Huminiecki L."/>
            <person name="Iacono M."/>
            <person name="Ikeo K."/>
            <person name="Iwama A."/>
            <person name="Ishikawa T."/>
            <person name="Jakt M."/>
            <person name="Kanapin A."/>
            <person name="Katoh M."/>
            <person name="Kawasawa Y."/>
            <person name="Kelso J."/>
            <person name="Kitamura H."/>
            <person name="Kitano H."/>
            <person name="Kollias G."/>
            <person name="Krishnan S.P."/>
            <person name="Kruger A."/>
            <person name="Kummerfeld S.K."/>
            <person name="Kurochkin I.V."/>
            <person name="Lareau L.F."/>
            <person name="Lazarevic D."/>
            <person name="Lipovich L."/>
            <person name="Liu J."/>
            <person name="Liuni S."/>
            <person name="McWilliam S."/>
            <person name="Madan Babu M."/>
            <person name="Madera M."/>
            <person name="Marchionni L."/>
            <person name="Matsuda H."/>
            <person name="Matsuzawa S."/>
            <person name="Miki H."/>
            <person name="Mignone F."/>
            <person name="Miyake S."/>
            <person name="Morris K."/>
            <person name="Mottagui-Tabar S."/>
            <person name="Mulder N."/>
            <person name="Nakano N."/>
            <person name="Nakauchi H."/>
            <person name="Ng P."/>
            <person name="Nilsson R."/>
            <person name="Nishiguchi S."/>
            <person name="Nishikawa S."/>
            <person name="Nori F."/>
            <person name="Ohara O."/>
            <person name="Okazaki Y."/>
            <person name="Orlando V."/>
            <person name="Pang K.C."/>
            <person name="Pavan W.J."/>
            <person name="Pavesi G."/>
            <person name="Pesole G."/>
            <person name="Petrovsky N."/>
            <person name="Piazza S."/>
            <person name="Reed J."/>
            <person name="Reid J.F."/>
            <person name="Ring B.Z."/>
            <person name="Ringwald M."/>
            <person name="Rost B."/>
            <person name="Ruan Y."/>
            <person name="Salzberg S.L."/>
            <person name="Sandelin A."/>
            <person name="Schneider C."/>
            <person name="Schoenbach C."/>
            <person name="Sekiguchi K."/>
            <person name="Semple C.A."/>
            <person name="Seno S."/>
            <person name="Sessa L."/>
            <person name="Sheng Y."/>
            <person name="Shibata Y."/>
            <person name="Shimada H."/>
            <person name="Shimada K."/>
            <person name="Silva D."/>
            <person name="Sinclair B."/>
            <person name="Sperling S."/>
            <person name="Stupka E."/>
            <person name="Sugiura K."/>
            <person name="Sultana R."/>
            <person name="Takenaka Y."/>
            <person name="Taki K."/>
            <person name="Tammoja K."/>
            <person name="Tan S.L."/>
            <person name="Tang S."/>
            <person name="Taylor M.S."/>
            <person name="Tegner J."/>
            <person name="Teichmann S.A."/>
            <person name="Ueda H.R."/>
            <person name="van Nimwegen E."/>
            <person name="Verardo R."/>
            <person name="Wei C.L."/>
            <person name="Yagi K."/>
            <person name="Yamanishi H."/>
            <person name="Zabarovsky E."/>
            <person name="Zhu S."/>
            <person name="Zimmer A."/>
            <person name="Hide W."/>
            <person name="Bult C."/>
            <person name="Grimmond S.M."/>
            <person name="Teasdale R.D."/>
            <person name="Liu E.T."/>
            <person name="Brusic V."/>
            <person name="Quackenbush J."/>
            <person name="Wahlestedt C."/>
            <person name="Mattick J.S."/>
            <person name="Hume D.A."/>
            <person name="Kai C."/>
            <person name="Sasaki D."/>
            <person name="Tomaru Y."/>
            <person name="Fukuda S."/>
            <person name="Kanamori-Katayama M."/>
            <person name="Suzuki M."/>
            <person name="Aoki J."/>
            <person name="Arakawa T."/>
            <person name="Iida J."/>
            <person name="Imamura K."/>
            <person name="Itoh M."/>
            <person name="Kato T."/>
            <person name="Kawaji H."/>
            <person name="Kawagashira N."/>
            <person name="Kawashima T."/>
            <person name="Kojima M."/>
            <person name="Kondo S."/>
            <person name="Konno H."/>
            <person name="Nakano K."/>
            <person name="Ninomiya N."/>
            <person name="Nishio T."/>
            <person name="Okada M."/>
            <person name="Plessy C."/>
            <person name="Shibata K."/>
            <person name="Shiraki T."/>
            <person name="Suzuki S."/>
            <person name="Tagami M."/>
            <person name="Waki K."/>
            <person name="Watahiki A."/>
            <person name="Okamura-Oho Y."/>
            <person name="Suzuki H."/>
            <person name="Kawai J."/>
            <person name="Hayashizaki Y."/>
        </authorList>
    </citation>
    <scope>NUCLEOTIDE SEQUENCE [LARGE SCALE MRNA]</scope>
    <source>
        <strain>C57BL/6J</strain>
        <tissue>Cerebellum</tissue>
        <tissue>Spinal cord</tissue>
    </source>
</reference>
<reference key="3">
    <citation type="journal article" date="2004" name="Genome Res.">
        <title>The status, quality, and expansion of the NIH full-length cDNA project: the Mammalian Gene Collection (MGC).</title>
        <authorList>
            <consortium name="The MGC Project Team"/>
        </authorList>
    </citation>
    <scope>NUCLEOTIDE SEQUENCE [LARGE SCALE MRNA]</scope>
    <source>
        <tissue>Mammary gland</tissue>
    </source>
</reference>
<reference key="4">
    <citation type="journal article" date="1986" name="Eur. J. Biochem.">
        <title>Structure and expression of mouse aldolase genes. Brain-specific aldolase C amino acid sequence is closely related to aldolase A.</title>
        <authorList>
            <person name="Paolella G."/>
            <person name="Buono P."/>
            <person name="Mancini P."/>
            <person name="Izzo P."/>
            <person name="Salvatore F."/>
        </authorList>
    </citation>
    <scope>NUCLEOTIDE SEQUENCE [MRNA] OF 1-227</scope>
</reference>
<reference key="5">
    <citation type="submission" date="2009-01" db="UniProtKB">
        <authorList>
            <person name="Lubec G."/>
            <person name="Klug S."/>
            <person name="Kang S.U."/>
            <person name="Sunyer B."/>
            <person name="Chen W.-Q."/>
        </authorList>
    </citation>
    <scope>PROTEIN SEQUENCE OF 2-13; 29-57; 61-69; 73-96; 102-108; 112-134; 154-215; 244-258; 260-289; 305-315; 319-330 AND 332-363</scope>
    <scope>IDENTIFICATION BY MASS SPECTROMETRY</scope>
    <source>
        <strain>C57BL/6J</strain>
        <strain>OF1</strain>
        <tissue>Brain</tissue>
        <tissue>Hippocampus</tissue>
    </source>
</reference>
<reference key="6">
    <citation type="journal article" date="2000" name="Brain Res. Mol. Brain Res.">
        <title>Enhanced levels of scrapie responsive gene mRNA in BSE-infected mouse brain.</title>
        <authorList>
            <person name="Dandoy-Dron F.C."/>
            <person name="Benboudjema L."/>
            <person name="Guillo F."/>
            <person name="Jaegly A."/>
            <person name="Jasmin C."/>
            <person name="Dormont D."/>
            <person name="Tovey M.G."/>
            <person name="Dron M."/>
        </authorList>
    </citation>
    <scope>NUCLEOTIDE SEQUENCE [MRNA] OF 281-363</scope>
    <scope>TISSUE SPECIFICITY</scope>
    <source>
        <strain>BALB/cJ</strain>
        <tissue>Brain</tissue>
    </source>
</reference>
<reference key="7">
    <citation type="journal article" date="2010" name="Cell">
        <title>A tissue-specific atlas of mouse protein phosphorylation and expression.</title>
        <authorList>
            <person name="Huttlin E.L."/>
            <person name="Jedrychowski M.P."/>
            <person name="Elias J.E."/>
            <person name="Goswami T."/>
            <person name="Rad R."/>
            <person name="Beausoleil S.A."/>
            <person name="Villen J."/>
            <person name="Haas W."/>
            <person name="Sowa M.E."/>
            <person name="Gygi S.P."/>
        </authorList>
    </citation>
    <scope>IDENTIFICATION BY MASS SPECTROMETRY [LARGE SCALE ANALYSIS]</scope>
    <source>
        <tissue>Brain</tissue>
        <tissue>Brown adipose tissue</tissue>
        <tissue>Kidney</tissue>
        <tissue>Liver</tissue>
        <tissue>Spleen</tissue>
        <tissue>Testis</tissue>
    </source>
</reference>
<comment type="catalytic activity">
    <reaction>
        <text>beta-D-fructose 1,6-bisphosphate = D-glyceraldehyde 3-phosphate + dihydroxyacetone phosphate</text>
        <dbReference type="Rhea" id="RHEA:14729"/>
        <dbReference type="ChEBI" id="CHEBI:32966"/>
        <dbReference type="ChEBI" id="CHEBI:57642"/>
        <dbReference type="ChEBI" id="CHEBI:59776"/>
        <dbReference type="EC" id="4.1.2.13"/>
    </reaction>
</comment>
<comment type="pathway">
    <text>Carbohydrate degradation; glycolysis; D-glyceraldehyde 3-phosphate and glycerone phosphate from D-glucose: step 4/4.</text>
</comment>
<comment type="subunit">
    <text evidence="1">Homotetramer. Interacts with ATP6V1E1 (By similarity).</text>
</comment>
<comment type="tissue specificity">
    <text evidence="5 6">Expressed exclusively in Purkinje cells in bands running from anterior to posterior across most of the cerebellum. Expressed at higher levels in the brains of BSE-infected animals.</text>
</comment>
<comment type="developmental stage">
    <text evidence="6">Expression begins in the first week of postnatal life.</text>
</comment>
<comment type="miscellaneous">
    <text>In vertebrates, three forms of this ubiquitous glycolytic enzyme are found, aldolase A in muscle, aldolase B in liver and aldolase C in brain.</text>
</comment>
<comment type="similarity">
    <text evidence="7">Belongs to the class I fructose-bisphosphate aldolase family.</text>
</comment>
<keyword id="KW-0007">Acetylation</keyword>
<keyword id="KW-0903">Direct protein sequencing</keyword>
<keyword id="KW-0324">Glycolysis</keyword>
<keyword id="KW-0456">Lyase</keyword>
<keyword id="KW-0597">Phosphoprotein</keyword>
<keyword id="KW-1185">Reference proteome</keyword>
<keyword id="KW-0704">Schiff base</keyword>
<evidence type="ECO:0000250" key="1"/>
<evidence type="ECO:0000250" key="2">
    <source>
        <dbReference type="UniProtKB" id="P05065"/>
    </source>
</evidence>
<evidence type="ECO:0000250" key="3">
    <source>
        <dbReference type="UniProtKB" id="P09117"/>
    </source>
</evidence>
<evidence type="ECO:0000250" key="4">
    <source>
        <dbReference type="UniProtKB" id="P09972"/>
    </source>
</evidence>
<evidence type="ECO:0000269" key="5">
    <source>
    </source>
</evidence>
<evidence type="ECO:0000269" key="6">
    <source>
    </source>
</evidence>
<evidence type="ECO:0000305" key="7"/>
<name>ALDOC_MOUSE</name>
<accession>P05063</accession>
<accession>Q64011</accession>
<accession>Q8CA91</accession>
<accession>Q99K96</accession>
<accession>Q9DBA4</accession>
<accession>Q9JK32</accession>
<dbReference type="EC" id="4.1.2.13"/>
<dbReference type="EMBL" id="S72537">
    <property type="protein sequence ID" value="AAB32064.1"/>
    <property type="molecule type" value="mRNA"/>
</dbReference>
<dbReference type="EMBL" id="AK005077">
    <property type="protein sequence ID" value="BAB23801.1"/>
    <property type="molecule type" value="mRNA"/>
</dbReference>
<dbReference type="EMBL" id="AK039267">
    <property type="protein sequence ID" value="BAC30300.1"/>
    <property type="molecule type" value="mRNA"/>
</dbReference>
<dbReference type="EMBL" id="BC004802">
    <property type="protein sequence ID" value="AAH04802.1"/>
    <property type="molecule type" value="mRNA"/>
</dbReference>
<dbReference type="EMBL" id="BC008184">
    <property type="protein sequence ID" value="AAH08184.1"/>
    <property type="molecule type" value="mRNA"/>
</dbReference>
<dbReference type="EMBL" id="X03796">
    <property type="protein sequence ID" value="CAA27422.1"/>
    <property type="molecule type" value="mRNA"/>
</dbReference>
<dbReference type="EMBL" id="AJ132391">
    <property type="protein sequence ID" value="CAB77178.1"/>
    <property type="molecule type" value="mRNA"/>
</dbReference>
<dbReference type="CCDS" id="CCDS25099.1"/>
<dbReference type="PIR" id="A25388">
    <property type="entry name" value="ADMSC"/>
</dbReference>
<dbReference type="PIR" id="I53145">
    <property type="entry name" value="I53145"/>
</dbReference>
<dbReference type="RefSeq" id="NP_001290352.1">
    <property type="nucleotide sequence ID" value="NM_001303423.1"/>
</dbReference>
<dbReference type="RefSeq" id="NP_033787.2">
    <property type="nucleotide sequence ID" value="NM_009657.4"/>
</dbReference>
<dbReference type="SMR" id="P05063"/>
<dbReference type="BioGRID" id="198068">
    <property type="interactions" value="28"/>
</dbReference>
<dbReference type="FunCoup" id="P05063">
    <property type="interactions" value="1330"/>
</dbReference>
<dbReference type="IntAct" id="P05063">
    <property type="interactions" value="3"/>
</dbReference>
<dbReference type="STRING" id="10090.ENSMUSP00000017534"/>
<dbReference type="GlyGen" id="P05063">
    <property type="glycosylation" value="2 sites, 1 O-linked glycan (1 site)"/>
</dbReference>
<dbReference type="iPTMnet" id="P05063"/>
<dbReference type="MetOSite" id="P05063"/>
<dbReference type="PhosphoSitePlus" id="P05063"/>
<dbReference type="SwissPalm" id="P05063"/>
<dbReference type="REPRODUCTION-2DPAGE" id="IPI00119458"/>
<dbReference type="jPOST" id="P05063"/>
<dbReference type="PaxDb" id="10090-ENSMUSP00000099536"/>
<dbReference type="PeptideAtlas" id="P05063"/>
<dbReference type="ProteomicsDB" id="296172"/>
<dbReference type="Pumba" id="P05063"/>
<dbReference type="Antibodypedia" id="1111">
    <property type="antibodies" value="457 antibodies from 33 providers"/>
</dbReference>
<dbReference type="DNASU" id="11676"/>
<dbReference type="Ensembl" id="ENSMUST00000017534.15">
    <property type="protein sequence ID" value="ENSMUSP00000017534.9"/>
    <property type="gene ID" value="ENSMUSG00000017390.16"/>
</dbReference>
<dbReference type="Ensembl" id="ENSMUST00000102478.4">
    <property type="protein sequence ID" value="ENSMUSP00000099536.4"/>
    <property type="gene ID" value="ENSMUSG00000017390.16"/>
</dbReference>
<dbReference type="GeneID" id="11676"/>
<dbReference type="KEGG" id="mmu:11676"/>
<dbReference type="UCSC" id="uc007kiw.2">
    <property type="organism name" value="mouse"/>
</dbReference>
<dbReference type="AGR" id="MGI:101863"/>
<dbReference type="CTD" id="230"/>
<dbReference type="MGI" id="MGI:101863">
    <property type="gene designation" value="Aldoc"/>
</dbReference>
<dbReference type="VEuPathDB" id="HostDB:ENSMUSG00000017390"/>
<dbReference type="eggNOG" id="KOG1557">
    <property type="taxonomic scope" value="Eukaryota"/>
</dbReference>
<dbReference type="GeneTree" id="ENSGT00950000182987"/>
<dbReference type="HOGENOM" id="CLU_031243_0_0_1"/>
<dbReference type="InParanoid" id="P05063"/>
<dbReference type="OMA" id="GDAMQKW"/>
<dbReference type="OrthoDB" id="36455at2759"/>
<dbReference type="PhylomeDB" id="P05063"/>
<dbReference type="TreeFam" id="TF314203"/>
<dbReference type="Reactome" id="R-MMU-6798695">
    <property type="pathway name" value="Neutrophil degranulation"/>
</dbReference>
<dbReference type="Reactome" id="R-MMU-70171">
    <property type="pathway name" value="Glycolysis"/>
</dbReference>
<dbReference type="Reactome" id="R-MMU-70263">
    <property type="pathway name" value="Gluconeogenesis"/>
</dbReference>
<dbReference type="SABIO-RK" id="P05063"/>
<dbReference type="UniPathway" id="UPA00109">
    <property type="reaction ID" value="UER00183"/>
</dbReference>
<dbReference type="BioGRID-ORCS" id="11676">
    <property type="hits" value="2 hits in 78 CRISPR screens"/>
</dbReference>
<dbReference type="CD-CODE" id="CE726F99">
    <property type="entry name" value="Postsynaptic density"/>
</dbReference>
<dbReference type="ChiTaRS" id="Aldoc">
    <property type="organism name" value="mouse"/>
</dbReference>
<dbReference type="PRO" id="PR:P05063"/>
<dbReference type="Proteomes" id="UP000000589">
    <property type="component" value="Chromosome 11"/>
</dbReference>
<dbReference type="RNAct" id="P05063">
    <property type="molecule type" value="protein"/>
</dbReference>
<dbReference type="Bgee" id="ENSMUSG00000017390">
    <property type="expression patterns" value="Expressed in cerebellar vermis and 217 other cell types or tissues"/>
</dbReference>
<dbReference type="GO" id="GO:0005739">
    <property type="term" value="C:mitochondrion"/>
    <property type="evidence" value="ECO:0007005"/>
    <property type="project" value="MGI"/>
</dbReference>
<dbReference type="GO" id="GO:0008092">
    <property type="term" value="F:cytoskeletal protein binding"/>
    <property type="evidence" value="ECO:0007669"/>
    <property type="project" value="Ensembl"/>
</dbReference>
<dbReference type="GO" id="GO:0004332">
    <property type="term" value="F:fructose-bisphosphate aldolase activity"/>
    <property type="evidence" value="ECO:0000314"/>
    <property type="project" value="MGI"/>
</dbReference>
<dbReference type="GO" id="GO:0030855">
    <property type="term" value="P:epithelial cell differentiation"/>
    <property type="evidence" value="ECO:0007669"/>
    <property type="project" value="Ensembl"/>
</dbReference>
<dbReference type="GO" id="GO:0030388">
    <property type="term" value="P:fructose 1,6-bisphosphate metabolic process"/>
    <property type="evidence" value="ECO:0000250"/>
    <property type="project" value="UniProtKB"/>
</dbReference>
<dbReference type="GO" id="GO:0006094">
    <property type="term" value="P:gluconeogenesis"/>
    <property type="evidence" value="ECO:0000314"/>
    <property type="project" value="MGI"/>
</dbReference>
<dbReference type="GO" id="GO:0006096">
    <property type="term" value="P:glycolytic process"/>
    <property type="evidence" value="ECO:0007669"/>
    <property type="project" value="UniProtKB-UniPathway"/>
</dbReference>
<dbReference type="CDD" id="cd00948">
    <property type="entry name" value="FBP_aldolase_I_a"/>
    <property type="match status" value="1"/>
</dbReference>
<dbReference type="FunFam" id="3.20.20.70:FF:000021">
    <property type="entry name" value="Fructose-bisphosphate aldolase"/>
    <property type="match status" value="1"/>
</dbReference>
<dbReference type="Gene3D" id="3.20.20.70">
    <property type="entry name" value="Aldolase class I"/>
    <property type="match status" value="1"/>
</dbReference>
<dbReference type="InterPro" id="IPR029768">
    <property type="entry name" value="Aldolase_I_AS"/>
</dbReference>
<dbReference type="InterPro" id="IPR013785">
    <property type="entry name" value="Aldolase_TIM"/>
</dbReference>
<dbReference type="InterPro" id="IPR000741">
    <property type="entry name" value="FBA_I"/>
</dbReference>
<dbReference type="NCBIfam" id="NF033379">
    <property type="entry name" value="FrucBisAld_I"/>
    <property type="match status" value="1"/>
</dbReference>
<dbReference type="PANTHER" id="PTHR11627">
    <property type="entry name" value="FRUCTOSE-BISPHOSPHATE ALDOLASE"/>
    <property type="match status" value="1"/>
</dbReference>
<dbReference type="Pfam" id="PF00274">
    <property type="entry name" value="Glycolytic"/>
    <property type="match status" value="1"/>
</dbReference>
<dbReference type="SUPFAM" id="SSF51569">
    <property type="entry name" value="Aldolase"/>
    <property type="match status" value="1"/>
</dbReference>
<dbReference type="PROSITE" id="PS00158">
    <property type="entry name" value="ALDOLASE_CLASS_I"/>
    <property type="match status" value="1"/>
</dbReference>
<protein>
    <recommendedName>
        <fullName>Fructose-bisphosphate aldolase C</fullName>
        <ecNumber>4.1.2.13</ecNumber>
    </recommendedName>
    <alternativeName>
        <fullName>Aldolase 3</fullName>
    </alternativeName>
    <alternativeName>
        <fullName>Brain-type aldolase</fullName>
    </alternativeName>
    <alternativeName>
        <fullName>Scrapie-responsive protein 2</fullName>
    </alternativeName>
    <alternativeName>
        <fullName>Zebrin II</fullName>
    </alternativeName>
</protein>